<dbReference type="EMBL" id="CP000803">
    <property type="protein sequence ID" value="ABU62010.1"/>
    <property type="molecule type" value="Genomic_DNA"/>
</dbReference>
<dbReference type="RefSeq" id="WP_011648741.1">
    <property type="nucleotide sequence ID" value="NC_009749.1"/>
</dbReference>
<dbReference type="SMR" id="A7NDF7"/>
<dbReference type="KEGG" id="fta:FTA_1535"/>
<dbReference type="HOGENOM" id="CLU_014841_3_0_6"/>
<dbReference type="GO" id="GO:0005737">
    <property type="term" value="C:cytoplasm"/>
    <property type="evidence" value="ECO:0007669"/>
    <property type="project" value="UniProtKB-SubCell"/>
</dbReference>
<dbReference type="GO" id="GO:0009380">
    <property type="term" value="C:excinuclease repair complex"/>
    <property type="evidence" value="ECO:0007669"/>
    <property type="project" value="InterPro"/>
</dbReference>
<dbReference type="GO" id="GO:0003677">
    <property type="term" value="F:DNA binding"/>
    <property type="evidence" value="ECO:0007669"/>
    <property type="project" value="UniProtKB-UniRule"/>
</dbReference>
<dbReference type="GO" id="GO:0009381">
    <property type="term" value="F:excinuclease ABC activity"/>
    <property type="evidence" value="ECO:0007669"/>
    <property type="project" value="UniProtKB-UniRule"/>
</dbReference>
<dbReference type="GO" id="GO:0006289">
    <property type="term" value="P:nucleotide-excision repair"/>
    <property type="evidence" value="ECO:0007669"/>
    <property type="project" value="UniProtKB-UniRule"/>
</dbReference>
<dbReference type="GO" id="GO:0009432">
    <property type="term" value="P:SOS response"/>
    <property type="evidence" value="ECO:0007669"/>
    <property type="project" value="UniProtKB-UniRule"/>
</dbReference>
<dbReference type="CDD" id="cd10434">
    <property type="entry name" value="GIY-YIG_UvrC_Cho"/>
    <property type="match status" value="1"/>
</dbReference>
<dbReference type="FunFam" id="3.30.420.340:FF:000001">
    <property type="entry name" value="UvrABC system protein C"/>
    <property type="match status" value="1"/>
</dbReference>
<dbReference type="FunFam" id="3.40.1440.10:FF:000001">
    <property type="entry name" value="UvrABC system protein C"/>
    <property type="match status" value="1"/>
</dbReference>
<dbReference type="Gene3D" id="1.10.150.20">
    <property type="entry name" value="5' to 3' exonuclease, C-terminal subdomain"/>
    <property type="match status" value="1"/>
</dbReference>
<dbReference type="Gene3D" id="3.40.1440.10">
    <property type="entry name" value="GIY-YIG endonuclease"/>
    <property type="match status" value="1"/>
</dbReference>
<dbReference type="Gene3D" id="4.10.860.10">
    <property type="entry name" value="UVR domain"/>
    <property type="match status" value="1"/>
</dbReference>
<dbReference type="Gene3D" id="3.30.420.340">
    <property type="entry name" value="UvrC, RNAse H endonuclease domain"/>
    <property type="match status" value="1"/>
</dbReference>
<dbReference type="HAMAP" id="MF_00203">
    <property type="entry name" value="UvrC"/>
    <property type="match status" value="1"/>
</dbReference>
<dbReference type="InterPro" id="IPR000305">
    <property type="entry name" value="GIY-YIG_endonuc"/>
</dbReference>
<dbReference type="InterPro" id="IPR035901">
    <property type="entry name" value="GIY-YIG_endonuc_sf"/>
</dbReference>
<dbReference type="InterPro" id="IPR047296">
    <property type="entry name" value="GIY-YIG_UvrC_Cho"/>
</dbReference>
<dbReference type="InterPro" id="IPR010994">
    <property type="entry name" value="RuvA_2-like"/>
</dbReference>
<dbReference type="InterPro" id="IPR001943">
    <property type="entry name" value="UVR_dom"/>
</dbReference>
<dbReference type="InterPro" id="IPR036876">
    <property type="entry name" value="UVR_dom_sf"/>
</dbReference>
<dbReference type="InterPro" id="IPR050066">
    <property type="entry name" value="UvrABC_protein_C"/>
</dbReference>
<dbReference type="InterPro" id="IPR004791">
    <property type="entry name" value="UvrC"/>
</dbReference>
<dbReference type="InterPro" id="IPR001162">
    <property type="entry name" value="UvrC_RNase_H_dom"/>
</dbReference>
<dbReference type="InterPro" id="IPR038476">
    <property type="entry name" value="UvrC_RNase_H_dom_sf"/>
</dbReference>
<dbReference type="NCBIfam" id="TIGR00194">
    <property type="entry name" value="uvrC"/>
    <property type="match status" value="1"/>
</dbReference>
<dbReference type="PANTHER" id="PTHR30562:SF1">
    <property type="entry name" value="UVRABC SYSTEM PROTEIN C"/>
    <property type="match status" value="1"/>
</dbReference>
<dbReference type="PANTHER" id="PTHR30562">
    <property type="entry name" value="UVRC/OXIDOREDUCTASE"/>
    <property type="match status" value="1"/>
</dbReference>
<dbReference type="Pfam" id="PF01541">
    <property type="entry name" value="GIY-YIG"/>
    <property type="match status" value="1"/>
</dbReference>
<dbReference type="Pfam" id="PF14520">
    <property type="entry name" value="HHH_5"/>
    <property type="match status" value="1"/>
</dbReference>
<dbReference type="Pfam" id="PF02151">
    <property type="entry name" value="UVR"/>
    <property type="match status" value="1"/>
</dbReference>
<dbReference type="Pfam" id="PF22920">
    <property type="entry name" value="UvrC_RNaseH"/>
    <property type="match status" value="1"/>
</dbReference>
<dbReference type="Pfam" id="PF08459">
    <property type="entry name" value="UvrC_RNaseH_dom"/>
    <property type="match status" value="1"/>
</dbReference>
<dbReference type="SMART" id="SM00465">
    <property type="entry name" value="GIYc"/>
    <property type="match status" value="1"/>
</dbReference>
<dbReference type="SUPFAM" id="SSF46600">
    <property type="entry name" value="C-terminal UvrC-binding domain of UvrB"/>
    <property type="match status" value="1"/>
</dbReference>
<dbReference type="SUPFAM" id="SSF82771">
    <property type="entry name" value="GIY-YIG endonuclease"/>
    <property type="match status" value="1"/>
</dbReference>
<dbReference type="SUPFAM" id="SSF47781">
    <property type="entry name" value="RuvA domain 2-like"/>
    <property type="match status" value="1"/>
</dbReference>
<dbReference type="PROSITE" id="PS50164">
    <property type="entry name" value="GIY_YIG"/>
    <property type="match status" value="1"/>
</dbReference>
<dbReference type="PROSITE" id="PS50151">
    <property type="entry name" value="UVR"/>
    <property type="match status" value="1"/>
</dbReference>
<dbReference type="PROSITE" id="PS50165">
    <property type="entry name" value="UVRC"/>
    <property type="match status" value="1"/>
</dbReference>
<comment type="function">
    <text evidence="1">The UvrABC repair system catalyzes the recognition and processing of DNA lesions. UvrC both incises the 5' and 3' sides of the lesion. The N-terminal half is responsible for the 3' incision and the C-terminal half is responsible for the 5' incision.</text>
</comment>
<comment type="subunit">
    <text evidence="1">Interacts with UvrB in an incision complex.</text>
</comment>
<comment type="subcellular location">
    <subcellularLocation>
        <location evidence="1">Cytoplasm</location>
    </subcellularLocation>
</comment>
<comment type="similarity">
    <text evidence="1">Belongs to the UvrC family.</text>
</comment>
<gene>
    <name evidence="1" type="primary">uvrC</name>
    <name type="ordered locus">FTA_1535</name>
</gene>
<reference key="1">
    <citation type="journal article" date="2009" name="PLoS ONE">
        <title>Complete genome sequence of Francisella tularensis subspecies holarctica FTNF002-00.</title>
        <authorList>
            <person name="Barabote R.D."/>
            <person name="Xie G."/>
            <person name="Brettin T.S."/>
            <person name="Hinrichs S.H."/>
            <person name="Fey P.D."/>
            <person name="Jay J.J."/>
            <person name="Engle J.L."/>
            <person name="Godbole S.D."/>
            <person name="Noronha J.M."/>
            <person name="Scheuermann R.H."/>
            <person name="Zhou L.W."/>
            <person name="Lion C."/>
            <person name="Dempsey M.P."/>
        </authorList>
    </citation>
    <scope>NUCLEOTIDE SEQUENCE [LARGE SCALE GENOMIC DNA]</scope>
    <source>
        <strain>FTNF002-00 / FTA</strain>
    </source>
</reference>
<feature type="chain" id="PRO_1000077788" description="UvrABC system protein C">
    <location>
        <begin position="1"/>
        <end position="612"/>
    </location>
</feature>
<feature type="domain" description="GIY-YIG" evidence="1">
    <location>
        <begin position="20"/>
        <end position="98"/>
    </location>
</feature>
<feature type="domain" description="UVR" evidence="1">
    <location>
        <begin position="208"/>
        <end position="243"/>
    </location>
</feature>
<sequence length="612" mass="70293">MIVDNSKDFDLKSFLANLTTHSGVYRMLDKHGEIIYVGKAKNLKNRINSYFSKGAKDSKTLMMVEQIARIEITITPSDYEAYLLENNLIKQHRPKYNILFKDDKSYPYLVISRDKFPRVSFYRGKSAYKKGQCFGPYVSISSVKNTLNTIQKIFPIRQCENSYYKSRVRPCLQYQIKRCLAPCVGLVSQQQYDEQLAILKKFLAGKFSSVLEEISAKMYQASEDMEYEKAQVYRDQLVVLRKLQQQQIVDIQEDKTFDVIGIYMQDSYASIALLQIQNGDVVADRHWSIDAKGQDKTSIMHAFLSHFYLGDEIRNIWPKNIILSKVEFADITDLMNSISQKIGQAINWIIAPAADNLKWLKLAEVNARQKLNIYTSSKSQYQKRLESLKEFLESEKDIKRIECFDISHFQGEATIASCVVYTDDGEDRKSHRRYNIKDIKSGDDYAAIHQAVSRRVSSGLEADNLPDVMIIDGGKGQIHQAEAVFREYGIQDKVQLVSLGKGVERISGKEKIYKGFDDTEYTLDEHNPGFLLLRQVRDSAHDHAIKGQRKKVSANRQSSIIEEIEGVGPKRRKALMMYFGGWQELSRASVDEIAKVKGISKKLAQEIWECFH</sequence>
<protein>
    <recommendedName>
        <fullName evidence="1">UvrABC system protein C</fullName>
        <shortName evidence="1">Protein UvrC</shortName>
    </recommendedName>
    <alternativeName>
        <fullName evidence="1">Excinuclease ABC subunit C</fullName>
    </alternativeName>
</protein>
<keyword id="KW-0963">Cytoplasm</keyword>
<keyword id="KW-0227">DNA damage</keyword>
<keyword id="KW-0228">DNA excision</keyword>
<keyword id="KW-0234">DNA repair</keyword>
<keyword id="KW-0267">Excision nuclease</keyword>
<keyword id="KW-0742">SOS response</keyword>
<accession>A7NDF7</accession>
<organism>
    <name type="scientific">Francisella tularensis subsp. holarctica (strain FTNF002-00 / FTA)</name>
    <dbReference type="NCBI Taxonomy" id="458234"/>
    <lineage>
        <taxon>Bacteria</taxon>
        <taxon>Pseudomonadati</taxon>
        <taxon>Pseudomonadota</taxon>
        <taxon>Gammaproteobacteria</taxon>
        <taxon>Thiotrichales</taxon>
        <taxon>Francisellaceae</taxon>
        <taxon>Francisella</taxon>
    </lineage>
</organism>
<evidence type="ECO:0000255" key="1">
    <source>
        <dbReference type="HAMAP-Rule" id="MF_00203"/>
    </source>
</evidence>
<name>UVRC_FRATF</name>
<proteinExistence type="inferred from homology"/>